<protein>
    <recommendedName>
        <fullName evidence="1 2">Galactose/methyl galactoside import ATP-binding protein MglA</fullName>
        <ecNumber evidence="1 3">7.5.2.11</ecNumber>
    </recommendedName>
</protein>
<reference key="1">
    <citation type="journal article" date="1991" name="Mol. Gen. Genet.">
        <title>Nucleotide sequence and analysis of the mgl operon of Escherichia coli K12.</title>
        <authorList>
            <person name="Hogg R.W."/>
            <person name="Voelker C."/>
            <person name="von Carlowitz I."/>
        </authorList>
    </citation>
    <scope>NUCLEOTIDE SEQUENCE [GENOMIC DNA]</scope>
    <scope>SUBUNIT</scope>
    <source>
        <strain>K12</strain>
    </source>
</reference>
<reference key="2">
    <citation type="journal article" date="1997" name="Science">
        <title>The complete genome sequence of Escherichia coli K-12.</title>
        <authorList>
            <person name="Blattner F.R."/>
            <person name="Plunkett G. III"/>
            <person name="Bloch C.A."/>
            <person name="Perna N.T."/>
            <person name="Burland V."/>
            <person name="Riley M."/>
            <person name="Collado-Vides J."/>
            <person name="Glasner J.D."/>
            <person name="Rode C.K."/>
            <person name="Mayhew G.F."/>
            <person name="Gregor J."/>
            <person name="Davis N.W."/>
            <person name="Kirkpatrick H.A."/>
            <person name="Goeden M.A."/>
            <person name="Rose D.J."/>
            <person name="Mau B."/>
            <person name="Shao Y."/>
        </authorList>
    </citation>
    <scope>NUCLEOTIDE SEQUENCE [LARGE SCALE GENOMIC DNA]</scope>
    <source>
        <strain>K12 / MG1655 / ATCC 47076</strain>
    </source>
</reference>
<reference key="3">
    <citation type="journal article" date="2006" name="Mol. Syst. Biol.">
        <title>Highly accurate genome sequences of Escherichia coli K-12 strains MG1655 and W3110.</title>
        <authorList>
            <person name="Hayashi K."/>
            <person name="Morooka N."/>
            <person name="Yamamoto Y."/>
            <person name="Fujita K."/>
            <person name="Isono K."/>
            <person name="Choi S."/>
            <person name="Ohtsubo E."/>
            <person name="Baba T."/>
            <person name="Wanner B.L."/>
            <person name="Mori H."/>
            <person name="Horiuchi T."/>
        </authorList>
    </citation>
    <scope>NUCLEOTIDE SEQUENCE [LARGE SCALE GENOMIC DNA]</scope>
    <source>
        <strain>K12 / W3110 / ATCC 27325 / DSM 5911</strain>
    </source>
</reference>
<reference key="4">
    <citation type="journal article" date="1987" name="Mol. Gen. Genet.">
        <title>Sequence of the mglB gene from Escherichia coli K12: comparison of wild-type and mutant galactose chemoreceptors.</title>
        <authorList>
            <person name="Scholle A."/>
            <person name="Vreemann J."/>
            <person name="Blank V."/>
            <person name="Nold A."/>
            <person name="Boos W."/>
            <person name="Manson M.D."/>
        </authorList>
    </citation>
    <scope>NUCLEOTIDE SEQUENCE [GENOMIC DNA] OF 1-73</scope>
    <source>
        <strain>K12</strain>
    </source>
</reference>
<reference key="5">
    <citation type="journal article" date="1970" name="Eur. J. Biochem.">
        <title>Close linkage between a galactose binding protein and the beta-methylgalactoside permease in Escherichia coli.</title>
        <authorList>
            <person name="Boos W."/>
            <person name="Sarvas M.O."/>
        </authorList>
    </citation>
    <scope>FUNCTION IN GALACTOSE AND METHYL GALACTOSIDE TRANSPORT</scope>
</reference>
<reference key="6">
    <citation type="journal article" date="1982" name="J. Biol. Chem.">
        <title>Identification of the mglA gene product in the beta-methylgalactoside transport system of Escherichia coli using plasmid DNA deletions generated in vitro.</title>
        <authorList>
            <person name="Rotman B."/>
            <person name="Guzman R."/>
        </authorList>
    </citation>
    <scope>FUNCTION IN METHYL GALACTOSIDE TRANSPORT</scope>
</reference>
<reference key="7">
    <citation type="journal article" date="1983" name="J. Bacteriol.">
        <title>Characterization of the mgl operon of Escherichia coli by transposon mutagenesis and molecular cloning.</title>
        <authorList>
            <person name="Harayama S."/>
            <person name="Bollinger J."/>
            <person name="Iino T."/>
            <person name="Hazelbauer G.L."/>
        </authorList>
    </citation>
    <scope>SUBCELLULAR LOCATION</scope>
    <scope>FUNCTION IN GALACTOSE TRANSPORT</scope>
    <source>
        <strain>K12</strain>
    </source>
</reference>
<name>MGLA_ECOLI</name>
<comment type="function">
    <text evidence="3 4 5 6">Part of the ABC transporter complex MglABC involved in galactose/methyl galactoside import. Responsible for energy coupling to the transport system (Probable).</text>
</comment>
<comment type="catalytic activity">
    <reaction evidence="1 3">
        <text>D-galactose(out) + ATP + H2O = D-galactose(in) + ADP + phosphate + H(+)</text>
        <dbReference type="Rhea" id="RHEA:60156"/>
        <dbReference type="ChEBI" id="CHEBI:4139"/>
        <dbReference type="ChEBI" id="CHEBI:15377"/>
        <dbReference type="ChEBI" id="CHEBI:15378"/>
        <dbReference type="ChEBI" id="CHEBI:30616"/>
        <dbReference type="ChEBI" id="CHEBI:43474"/>
        <dbReference type="ChEBI" id="CHEBI:456216"/>
        <dbReference type="EC" id="7.5.2.11"/>
    </reaction>
    <physiologicalReaction direction="left-to-right" evidence="1 3">
        <dbReference type="Rhea" id="RHEA:60157"/>
    </physiologicalReaction>
</comment>
<comment type="catalytic activity">
    <reaction evidence="1 6">
        <text>methyl beta-D-galactoside(out) + ATP + H2O = methyl beta-D-galactoside(in) + ADP + phosphate + H(+)</text>
        <dbReference type="Rhea" id="RHEA:72531"/>
        <dbReference type="ChEBI" id="CHEBI:15377"/>
        <dbReference type="ChEBI" id="CHEBI:15378"/>
        <dbReference type="ChEBI" id="CHEBI:17540"/>
        <dbReference type="ChEBI" id="CHEBI:30616"/>
        <dbReference type="ChEBI" id="CHEBI:43474"/>
        <dbReference type="ChEBI" id="CHEBI:456216"/>
    </reaction>
    <physiologicalReaction direction="left-to-right" evidence="1 6">
        <dbReference type="Rhea" id="RHEA:72532"/>
    </physiologicalReaction>
</comment>
<comment type="subunit">
    <text evidence="1 3">The complex is composed of one ATP-binding protein (MglA), two transmembrane proteins (MglC) and a solute-binding protein (MglB).</text>
</comment>
<comment type="subcellular location">
    <subcellularLocation>
        <location evidence="1 5">Cell inner membrane</location>
        <topology evidence="1 5">Peripheral membrane protein</topology>
    </subcellularLocation>
</comment>
<comment type="similarity">
    <text evidence="1">Belongs to the ABC transporter superfamily. Galactose/methyl galactoside importer (TC 3.A.1.2.3) family.</text>
</comment>
<evidence type="ECO:0000255" key="1">
    <source>
        <dbReference type="HAMAP-Rule" id="MF_01717"/>
    </source>
</evidence>
<evidence type="ECO:0000305" key="2"/>
<evidence type="ECO:0000305" key="3">
    <source>
    </source>
</evidence>
<evidence type="ECO:0000305" key="4">
    <source>
    </source>
</evidence>
<evidence type="ECO:0000305" key="5">
    <source>
    </source>
</evidence>
<evidence type="ECO:0000305" key="6">
    <source>
    </source>
</evidence>
<dbReference type="EC" id="7.5.2.11" evidence="1 3"/>
<dbReference type="EMBL" id="M59444">
    <property type="protein sequence ID" value="AAA24170.1"/>
    <property type="molecule type" value="Genomic_DNA"/>
</dbReference>
<dbReference type="EMBL" id="U00096">
    <property type="protein sequence ID" value="AAC75210.1"/>
    <property type="molecule type" value="Genomic_DNA"/>
</dbReference>
<dbReference type="EMBL" id="AP009048">
    <property type="protein sequence ID" value="BAE76626.1"/>
    <property type="molecule type" value="Genomic_DNA"/>
</dbReference>
<dbReference type="EMBL" id="X05646">
    <property type="protein sequence ID" value="CAA29133.1"/>
    <property type="molecule type" value="Genomic_DNA"/>
</dbReference>
<dbReference type="PIR" id="D64983">
    <property type="entry name" value="D64983"/>
</dbReference>
<dbReference type="RefSeq" id="NP_416654.1">
    <property type="nucleotide sequence ID" value="NC_000913.3"/>
</dbReference>
<dbReference type="RefSeq" id="WP_000255039.1">
    <property type="nucleotide sequence ID" value="NZ_SSZK01000011.1"/>
</dbReference>
<dbReference type="SMR" id="P0AAG8"/>
<dbReference type="BioGRID" id="4260868">
    <property type="interactions" value="33"/>
</dbReference>
<dbReference type="BioGRID" id="853280">
    <property type="interactions" value="6"/>
</dbReference>
<dbReference type="ComplexPortal" id="CPX-4341">
    <property type="entry name" value="Beta-methyl-D-galactoside/galactose ABC transporter complex"/>
</dbReference>
<dbReference type="FunCoup" id="P0AAG8">
    <property type="interactions" value="332"/>
</dbReference>
<dbReference type="IntAct" id="P0AAG8">
    <property type="interactions" value="13"/>
</dbReference>
<dbReference type="STRING" id="511145.b2149"/>
<dbReference type="TCDB" id="3.A.1.2.3">
    <property type="family name" value="the atp-binding cassette (abc) superfamily"/>
</dbReference>
<dbReference type="jPOST" id="P0AAG8"/>
<dbReference type="PaxDb" id="511145-b2149"/>
<dbReference type="EnsemblBacteria" id="AAC75210">
    <property type="protein sequence ID" value="AAC75210"/>
    <property type="gene ID" value="b2149"/>
</dbReference>
<dbReference type="GeneID" id="75172277"/>
<dbReference type="GeneID" id="949036"/>
<dbReference type="KEGG" id="ecj:JW2136"/>
<dbReference type="KEGG" id="eco:b2149"/>
<dbReference type="PATRIC" id="fig|1411691.4.peg.92"/>
<dbReference type="EchoBASE" id="EB0587"/>
<dbReference type="eggNOG" id="COG1129">
    <property type="taxonomic scope" value="Bacteria"/>
</dbReference>
<dbReference type="HOGENOM" id="CLU_000604_92_3_6"/>
<dbReference type="InParanoid" id="P0AAG8"/>
<dbReference type="OMA" id="WIFAGPD"/>
<dbReference type="OrthoDB" id="9776369at2"/>
<dbReference type="PhylomeDB" id="P0AAG8"/>
<dbReference type="BioCyc" id="EcoCyc:MGLA-MONOMER"/>
<dbReference type="BioCyc" id="MetaCyc:MGLA-MONOMER"/>
<dbReference type="PRO" id="PR:P0AAG8"/>
<dbReference type="Proteomes" id="UP000000625">
    <property type="component" value="Chromosome"/>
</dbReference>
<dbReference type="GO" id="GO:0055052">
    <property type="term" value="C:ATP-binding cassette (ABC) transporter complex, substrate-binding subunit-containing"/>
    <property type="evidence" value="ECO:0000303"/>
    <property type="project" value="ComplexPortal"/>
</dbReference>
<dbReference type="GO" id="GO:0016020">
    <property type="term" value="C:membrane"/>
    <property type="evidence" value="ECO:0000303"/>
    <property type="project" value="ComplexPortal"/>
</dbReference>
<dbReference type="GO" id="GO:0005886">
    <property type="term" value="C:plasma membrane"/>
    <property type="evidence" value="ECO:0000314"/>
    <property type="project" value="EcoCyc"/>
</dbReference>
<dbReference type="GO" id="GO:0005524">
    <property type="term" value="F:ATP binding"/>
    <property type="evidence" value="ECO:0000255"/>
    <property type="project" value="EcoCyc"/>
</dbReference>
<dbReference type="GO" id="GO:0016887">
    <property type="term" value="F:ATP hydrolysis activity"/>
    <property type="evidence" value="ECO:0007669"/>
    <property type="project" value="InterPro"/>
</dbReference>
<dbReference type="GO" id="GO:0005354">
    <property type="term" value="F:galactose transmembrane transporter activity"/>
    <property type="evidence" value="ECO:0000315"/>
    <property type="project" value="EcoCyc"/>
</dbReference>
<dbReference type="GO" id="GO:0015592">
    <property type="term" value="F:methylgalactoside transmembrane transporter activity"/>
    <property type="evidence" value="ECO:0000315"/>
    <property type="project" value="EcoCyc"/>
</dbReference>
<dbReference type="GO" id="GO:0006974">
    <property type="term" value="P:DNA damage response"/>
    <property type="evidence" value="ECO:0000270"/>
    <property type="project" value="EcoliWiki"/>
</dbReference>
<dbReference type="GO" id="GO:0015757">
    <property type="term" value="P:galactose transmembrane transport"/>
    <property type="evidence" value="ECO:0000315"/>
    <property type="project" value="EcoCyc"/>
</dbReference>
<dbReference type="GO" id="GO:0015765">
    <property type="term" value="P:methylgalactoside transport"/>
    <property type="evidence" value="ECO:0000315"/>
    <property type="project" value="EcoCyc"/>
</dbReference>
<dbReference type="CDD" id="cd03216">
    <property type="entry name" value="ABC_Carb_Monos_I"/>
    <property type="match status" value="1"/>
</dbReference>
<dbReference type="CDD" id="cd03215">
    <property type="entry name" value="ABC_Carb_Monos_II"/>
    <property type="match status" value="1"/>
</dbReference>
<dbReference type="FunFam" id="3.40.50.300:FF:000126">
    <property type="entry name" value="Galactose/methyl galactoside import ATP-binding protein MglA"/>
    <property type="match status" value="1"/>
</dbReference>
<dbReference type="FunFam" id="3.40.50.300:FF:000127">
    <property type="entry name" value="Ribose import ATP-binding protein RbsA"/>
    <property type="match status" value="1"/>
</dbReference>
<dbReference type="Gene3D" id="3.40.50.300">
    <property type="entry name" value="P-loop containing nucleotide triphosphate hydrolases"/>
    <property type="match status" value="2"/>
</dbReference>
<dbReference type="InterPro" id="IPR003593">
    <property type="entry name" value="AAA+_ATPase"/>
</dbReference>
<dbReference type="InterPro" id="IPR050107">
    <property type="entry name" value="ABC_carbohydrate_import_ATPase"/>
</dbReference>
<dbReference type="InterPro" id="IPR003439">
    <property type="entry name" value="ABC_transporter-like_ATP-bd"/>
</dbReference>
<dbReference type="InterPro" id="IPR017871">
    <property type="entry name" value="ABC_transporter-like_CS"/>
</dbReference>
<dbReference type="InterPro" id="IPR027417">
    <property type="entry name" value="P-loop_NTPase"/>
</dbReference>
<dbReference type="NCBIfam" id="NF008215">
    <property type="entry name" value="PRK10982.1"/>
    <property type="match status" value="1"/>
</dbReference>
<dbReference type="PANTHER" id="PTHR43790">
    <property type="entry name" value="CARBOHYDRATE TRANSPORT ATP-BINDING PROTEIN MG119-RELATED"/>
    <property type="match status" value="1"/>
</dbReference>
<dbReference type="PANTHER" id="PTHR43790:SF7">
    <property type="entry name" value="GALACTOSE_METHYL GALACTOSIDE IMPORT ATP-BINDING PROTEIN MGLA"/>
    <property type="match status" value="1"/>
</dbReference>
<dbReference type="Pfam" id="PF00005">
    <property type="entry name" value="ABC_tran"/>
    <property type="match status" value="2"/>
</dbReference>
<dbReference type="SMART" id="SM00382">
    <property type="entry name" value="AAA"/>
    <property type="match status" value="2"/>
</dbReference>
<dbReference type="SUPFAM" id="SSF52540">
    <property type="entry name" value="P-loop containing nucleoside triphosphate hydrolases"/>
    <property type="match status" value="2"/>
</dbReference>
<dbReference type="PROSITE" id="PS00211">
    <property type="entry name" value="ABC_TRANSPORTER_1"/>
    <property type="match status" value="1"/>
</dbReference>
<dbReference type="PROSITE" id="PS50893">
    <property type="entry name" value="ABC_TRANSPORTER_2"/>
    <property type="match status" value="2"/>
</dbReference>
<dbReference type="PROSITE" id="PS51260">
    <property type="entry name" value="MGLA"/>
    <property type="match status" value="1"/>
</dbReference>
<keyword id="KW-0067">ATP-binding</keyword>
<keyword id="KW-0997">Cell inner membrane</keyword>
<keyword id="KW-1003">Cell membrane</keyword>
<keyword id="KW-0472">Membrane</keyword>
<keyword id="KW-0547">Nucleotide-binding</keyword>
<keyword id="KW-1185">Reference proteome</keyword>
<keyword id="KW-0677">Repeat</keyword>
<keyword id="KW-0762">Sugar transport</keyword>
<keyword id="KW-1278">Translocase</keyword>
<keyword id="KW-0813">Transport</keyword>
<proteinExistence type="evidence at protein level"/>
<sequence>MVSSTTPSSGEYLLEMSGINKSFPGVKALDNVNLKVRPHSIHALMGENGAGKSTLLKCLFGIYQKDSGTILFQGKEIDFHSAKEALENGISMVHQELNLVLQRSVMDNMWLGRYPTKGMFVDQDKMYRETKAIFDELDIDIDPRARVGTLSVSQMQMIEIAKAFSYNAKIVIMDEPTSSLTEKEVNHLFTIIRKLKERGCGIVYISHKMEEIFQLCDEVTVLRDGQWIATEPLAGLTMDKIIAMMVGRSLNQRFPDKENKPGEVILEVRNLTSLRQPSIRDVSFDLHKGEILGIAGLVGAKRTDIVETLFGIREKSAGTITLHGKQINNHNANEAINHGFALVTEERRSTGIYAYLDIGFNSLISNIRNYKNKVGLLDNSRMKSDTQWVIDSMRVKTPGHRTQIGSLSGGNQQKVIIGRWLLTQPEILMLDEPTRGIDVGAKFEIYQLIAELAKKGKGIIIISSEMPELLGITDRILVMSNGLVSGIVDTKTTTQNEILRLASLHL</sequence>
<organism>
    <name type="scientific">Escherichia coli (strain K12)</name>
    <dbReference type="NCBI Taxonomy" id="83333"/>
    <lineage>
        <taxon>Bacteria</taxon>
        <taxon>Pseudomonadati</taxon>
        <taxon>Pseudomonadota</taxon>
        <taxon>Gammaproteobacteria</taxon>
        <taxon>Enterobacterales</taxon>
        <taxon>Enterobacteriaceae</taxon>
        <taxon>Escherichia</taxon>
    </lineage>
</organism>
<feature type="chain" id="PRO_0000092512" description="Galactose/methyl galactoside import ATP-binding protein MglA">
    <location>
        <begin position="1"/>
        <end position="506"/>
    </location>
</feature>
<feature type="domain" description="ABC transporter 1" evidence="1">
    <location>
        <begin position="14"/>
        <end position="249"/>
    </location>
</feature>
<feature type="domain" description="ABC transporter 2" evidence="1">
    <location>
        <begin position="264"/>
        <end position="506"/>
    </location>
</feature>
<feature type="binding site" evidence="1">
    <location>
        <begin position="46"/>
        <end position="53"/>
    </location>
    <ligand>
        <name>ATP</name>
        <dbReference type="ChEBI" id="CHEBI:30616"/>
    </ligand>
</feature>
<feature type="sequence conflict" description="In Ref. 4." evidence="2" ref="4">
    <original>KCLFGIYQKDSGT</original>
    <variation>NACLVFIKRLRH</variation>
    <location>
        <begin position="57"/>
        <end position="69"/>
    </location>
</feature>
<feature type="sequence conflict" description="In Ref. 2; AAA24170." evidence="2" ref="2">
    <original>A</original>
    <variation>G</variation>
    <location>
        <position position="163"/>
    </location>
</feature>
<accession>P0AAG8</accession>
<accession>P23199</accession>
<accession>P76442</accession>
<accession>Q2MAT0</accession>
<gene>
    <name evidence="1" type="primary">mglA</name>
    <name type="ordered locus">b2149</name>
    <name type="ordered locus">JW2136</name>
</gene>